<proteinExistence type="inferred from homology"/>
<evidence type="ECO:0000255" key="1">
    <source>
        <dbReference type="HAMAP-Rule" id="MF_01471"/>
    </source>
</evidence>
<protein>
    <recommendedName>
        <fullName evidence="1">CRISPR-associated endoribonuclease Cas2</fullName>
        <ecNumber evidence="1">3.1.-.-</ecNumber>
    </recommendedName>
</protein>
<reference key="1">
    <citation type="journal article" date="2016" name="Front. Microbiol.">
        <title>The complete genome sequence of hyperthermophile Dictyoglomus turgidum DSM 6724 reveals a specialized carbohydrate fermentor.</title>
        <authorList>
            <person name="Brumm P.J."/>
            <person name="Gowda K."/>
            <person name="Robb F.T."/>
            <person name="Mead D.A."/>
        </authorList>
    </citation>
    <scope>NUCLEOTIDE SEQUENCE [LARGE SCALE GENOMIC DNA]</scope>
    <source>
        <strain>DSM 6724 / Z-1310</strain>
    </source>
</reference>
<feature type="chain" id="PRO_0000417710" description="CRISPR-associated endoribonuclease Cas2">
    <location>
        <begin position="1"/>
        <end position="87"/>
    </location>
</feature>
<feature type="binding site" evidence="1">
    <location>
        <position position="8"/>
    </location>
    <ligand>
        <name>Mg(2+)</name>
        <dbReference type="ChEBI" id="CHEBI:18420"/>
        <note>catalytic</note>
    </ligand>
</feature>
<name>CAS2_DICTD</name>
<sequence>MYVIMVYDVNQRRINKVLNTARKYLEWIQNSVLEGEITEAKFEMLKREIEIIINEEEDSVIFYIMRTTKYSERQILGIEKNKREQIL</sequence>
<organism>
    <name type="scientific">Dictyoglomus turgidum (strain DSM 6724 / Z-1310)</name>
    <dbReference type="NCBI Taxonomy" id="515635"/>
    <lineage>
        <taxon>Bacteria</taxon>
        <taxon>Pseudomonadati</taxon>
        <taxon>Dictyoglomota</taxon>
        <taxon>Dictyoglomia</taxon>
        <taxon>Dictyoglomales</taxon>
        <taxon>Dictyoglomaceae</taxon>
        <taxon>Dictyoglomus</taxon>
    </lineage>
</organism>
<comment type="function">
    <text evidence="1">CRISPR (clustered regularly interspaced short palindromic repeat), is an adaptive immune system that provides protection against mobile genetic elements (viruses, transposable elements and conjugative plasmids). CRISPR clusters contain sequences complementary to antecedent mobile elements and target invading nucleic acids. CRISPR clusters are transcribed and processed into CRISPR RNA (crRNA). Functions as a ssRNA-specific endoribonuclease. Involved in the integration of spacer DNA into the CRISPR cassette.</text>
</comment>
<comment type="cofactor">
    <cofactor evidence="1">
        <name>Mg(2+)</name>
        <dbReference type="ChEBI" id="CHEBI:18420"/>
    </cofactor>
</comment>
<comment type="subunit">
    <text evidence="1">Homodimer, forms a heterotetramer with a Cas1 homodimer.</text>
</comment>
<comment type="similarity">
    <text evidence="1">Belongs to the CRISPR-associated endoribonuclease Cas2 protein family.</text>
</comment>
<gene>
    <name evidence="1" type="primary">cas2</name>
    <name type="ordered locus">Dtur_0618</name>
</gene>
<dbReference type="EC" id="3.1.-.-" evidence="1"/>
<dbReference type="EMBL" id="CP001251">
    <property type="protein sequence ID" value="ACK41906.1"/>
    <property type="molecule type" value="Genomic_DNA"/>
</dbReference>
<dbReference type="RefSeq" id="WP_012582991.1">
    <property type="nucleotide sequence ID" value="NC_011661.1"/>
</dbReference>
<dbReference type="RefSeq" id="YP_002352520.1">
    <property type="nucleotide sequence ID" value="NC_011661.1"/>
</dbReference>
<dbReference type="SMR" id="B8DZH3"/>
<dbReference type="STRING" id="515635.Dtur_0618"/>
<dbReference type="EnsemblBacteria" id="ACK41906">
    <property type="protein sequence ID" value="ACK41906"/>
    <property type="gene ID" value="Dtur_0618"/>
</dbReference>
<dbReference type="KEGG" id="dtu:Dtur_0618"/>
<dbReference type="PATRIC" id="fig|515635.4.peg.655"/>
<dbReference type="eggNOG" id="COG1343">
    <property type="taxonomic scope" value="Bacteria"/>
</dbReference>
<dbReference type="HOGENOM" id="CLU_161124_0_1_0"/>
<dbReference type="InParanoid" id="B8DZH3"/>
<dbReference type="OrthoDB" id="279819at2"/>
<dbReference type="Proteomes" id="UP000007719">
    <property type="component" value="Chromosome"/>
</dbReference>
<dbReference type="GO" id="GO:0046872">
    <property type="term" value="F:metal ion binding"/>
    <property type="evidence" value="ECO:0007669"/>
    <property type="project" value="UniProtKB-UniRule"/>
</dbReference>
<dbReference type="GO" id="GO:0004521">
    <property type="term" value="F:RNA endonuclease activity"/>
    <property type="evidence" value="ECO:0007669"/>
    <property type="project" value="InterPro"/>
</dbReference>
<dbReference type="GO" id="GO:0051607">
    <property type="term" value="P:defense response to virus"/>
    <property type="evidence" value="ECO:0007669"/>
    <property type="project" value="UniProtKB-UniRule"/>
</dbReference>
<dbReference type="GO" id="GO:0043571">
    <property type="term" value="P:maintenance of CRISPR repeat elements"/>
    <property type="evidence" value="ECO:0007669"/>
    <property type="project" value="UniProtKB-UniRule"/>
</dbReference>
<dbReference type="CDD" id="cd09725">
    <property type="entry name" value="Cas2_I_II_III"/>
    <property type="match status" value="1"/>
</dbReference>
<dbReference type="Gene3D" id="3.30.70.240">
    <property type="match status" value="1"/>
</dbReference>
<dbReference type="HAMAP" id="MF_01471">
    <property type="entry name" value="Cas2"/>
    <property type="match status" value="1"/>
</dbReference>
<dbReference type="InterPro" id="IPR021127">
    <property type="entry name" value="CRISPR_associated_Cas2"/>
</dbReference>
<dbReference type="InterPro" id="IPR019199">
    <property type="entry name" value="Virulence_VapD/CRISPR_Cas2"/>
</dbReference>
<dbReference type="NCBIfam" id="TIGR01573">
    <property type="entry name" value="cas2"/>
    <property type="match status" value="1"/>
</dbReference>
<dbReference type="PANTHER" id="PTHR34405">
    <property type="entry name" value="CRISPR-ASSOCIATED ENDORIBONUCLEASE CAS2"/>
    <property type="match status" value="1"/>
</dbReference>
<dbReference type="PANTHER" id="PTHR34405:SF1">
    <property type="entry name" value="CRISPR-ASSOCIATED ENDORIBONUCLEASE CAS2"/>
    <property type="match status" value="1"/>
</dbReference>
<dbReference type="Pfam" id="PF09827">
    <property type="entry name" value="CRISPR_Cas2"/>
    <property type="match status" value="1"/>
</dbReference>
<dbReference type="SUPFAM" id="SSF143430">
    <property type="entry name" value="TTP0101/SSO1404-like"/>
    <property type="match status" value="1"/>
</dbReference>
<keyword id="KW-0051">Antiviral defense</keyword>
<keyword id="KW-0255">Endonuclease</keyword>
<keyword id="KW-0378">Hydrolase</keyword>
<keyword id="KW-0460">Magnesium</keyword>
<keyword id="KW-0479">Metal-binding</keyword>
<keyword id="KW-0540">Nuclease</keyword>
<keyword id="KW-1185">Reference proteome</keyword>
<accession>B8DZH3</accession>